<accession>Q9LRK5</accession>
<accession>F4IYX6</accession>
<keyword id="KW-1185">Reference proteome</keyword>
<keyword id="KW-0677">Repeat</keyword>
<keyword id="KW-0964">Secreted</keyword>
<keyword id="KW-0732">Signal</keyword>
<gene>
    <name type="primary">CRRSP32</name>
    <name type="ordered locus">At3g22020</name>
    <name type="ORF">MZN24.20</name>
</gene>
<protein>
    <recommendedName>
        <fullName>Putative cysteine-rich repeat secretory protein 32</fullName>
    </recommendedName>
</protein>
<feature type="signal peptide" evidence="1">
    <location>
        <begin position="1"/>
        <end position="28"/>
    </location>
</feature>
<feature type="chain" id="PRO_0000296160" description="Putative cysteine-rich repeat secretory protein 32">
    <location>
        <begin position="29"/>
        <end position="255"/>
    </location>
</feature>
<feature type="domain" description="Gnk2-homologous 1" evidence="2">
    <location>
        <begin position="35"/>
        <end position="136"/>
    </location>
</feature>
<feature type="domain" description="Gnk2-homologous 2" evidence="2">
    <location>
        <begin position="143"/>
        <end position="252"/>
    </location>
</feature>
<organism>
    <name type="scientific">Arabidopsis thaliana</name>
    <name type="common">Mouse-ear cress</name>
    <dbReference type="NCBI Taxonomy" id="3702"/>
    <lineage>
        <taxon>Eukaryota</taxon>
        <taxon>Viridiplantae</taxon>
        <taxon>Streptophyta</taxon>
        <taxon>Embryophyta</taxon>
        <taxon>Tracheophyta</taxon>
        <taxon>Spermatophyta</taxon>
        <taxon>Magnoliopsida</taxon>
        <taxon>eudicotyledons</taxon>
        <taxon>Gunneridae</taxon>
        <taxon>Pentapetalae</taxon>
        <taxon>rosids</taxon>
        <taxon>malvids</taxon>
        <taxon>Brassicales</taxon>
        <taxon>Brassicaceae</taxon>
        <taxon>Camelineae</taxon>
        <taxon>Arabidopsis</taxon>
    </lineage>
</organism>
<evidence type="ECO:0000255" key="1"/>
<evidence type="ECO:0000255" key="2">
    <source>
        <dbReference type="PROSITE-ProRule" id="PRU00806"/>
    </source>
</evidence>
<evidence type="ECO:0000305" key="3"/>
<sequence>MYSSYSLFKCLVCFYILGIQVLIHSVSSQNLTNAYLHHKCLTRQGKYKPRSPYEENLNYLIDHISKYHFRDGFRHSAGEAPNSGNFVFQCRGDSYGSICGSCYATAVAGLRKRCQRYKGAIIWYDQCFLKVSTINSPPTKMDYENTFSMHNPNNINGDTQLFNQKMKNFLYELALKADKPKADGTGLLYYAAGTKRLGKNKLYAMVQCTLDIFHCKVCLEWSIKELSKCCEGKQGARVLGTSCNVRYELYPFIRT</sequence>
<proteinExistence type="uncertain"/>
<name>CRR32_ARATH</name>
<comment type="subcellular location">
    <subcellularLocation>
        <location evidence="3">Secreted</location>
    </subcellularLocation>
</comment>
<comment type="similarity">
    <text evidence="3">Belongs to the cysteine-rich repeat secretory protein family.</text>
</comment>
<comment type="caution">
    <text evidence="3">Could be the product of a pseudogene.</text>
</comment>
<comment type="sequence caution" evidence="3">
    <conflict type="erroneous gene model prediction">
        <sequence resource="EMBL-CDS" id="AEE76578"/>
    </conflict>
</comment>
<comment type="sequence caution" evidence="3">
    <conflict type="frameshift">
        <sequence resource="EMBL-CDS" id="AEE76578"/>
    </conflict>
</comment>
<comment type="sequence caution" evidence="3">
    <conflict type="erroneous gene model prediction">
        <sequence resource="EMBL-CDS" id="BAB01385"/>
    </conflict>
</comment>
<comment type="sequence caution" evidence="3">
    <conflict type="frameshift">
        <sequence resource="EMBL-CDS" id="BAB01385"/>
    </conflict>
</comment>
<reference key="1">
    <citation type="journal article" date="2000" name="DNA Res.">
        <title>Structural analysis of Arabidopsis thaliana chromosome 3. I. Sequence features of the regions of 4,504,864 bp covered by sixty P1 and TAC clones.</title>
        <authorList>
            <person name="Sato S."/>
            <person name="Nakamura Y."/>
            <person name="Kaneko T."/>
            <person name="Katoh T."/>
            <person name="Asamizu E."/>
            <person name="Tabata S."/>
        </authorList>
    </citation>
    <scope>NUCLEOTIDE SEQUENCE [LARGE SCALE GENOMIC DNA]</scope>
    <source>
        <strain>cv. Columbia</strain>
    </source>
</reference>
<reference key="2">
    <citation type="journal article" date="2017" name="Plant J.">
        <title>Araport11: a complete reannotation of the Arabidopsis thaliana reference genome.</title>
        <authorList>
            <person name="Cheng C.Y."/>
            <person name="Krishnakumar V."/>
            <person name="Chan A.P."/>
            <person name="Thibaud-Nissen F."/>
            <person name="Schobel S."/>
            <person name="Town C.D."/>
        </authorList>
    </citation>
    <scope>GENOME REANNOTATION</scope>
    <source>
        <strain>cv. Columbia</strain>
    </source>
</reference>
<reference key="3">
    <citation type="journal article" date="2001" name="Plant Physiol.">
        <title>A superfamily of proteins with novel cysteine-rich repeats.</title>
        <authorList>
            <person name="Chen Z."/>
        </authorList>
    </citation>
    <scope>GENE FAMILY ORGANIZATION</scope>
    <scope>NOMENCLATURE</scope>
</reference>
<dbReference type="EMBL" id="AB028622">
    <property type="protein sequence ID" value="BAB01385.1"/>
    <property type="status" value="ALT_SEQ"/>
    <property type="molecule type" value="Genomic_DNA"/>
</dbReference>
<dbReference type="EMBL" id="CP002686">
    <property type="protein sequence ID" value="AEE76578.1"/>
    <property type="status" value="ALT_SEQ"/>
    <property type="molecule type" value="Genomic_DNA"/>
</dbReference>
<dbReference type="RefSeq" id="NP_001319616.1">
    <property type="nucleotide sequence ID" value="NM_001338559.1"/>
</dbReference>
<dbReference type="RefSeq" id="NP_188840.4">
    <property type="nucleotide sequence ID" value="NM_113098.5"/>
</dbReference>
<dbReference type="SMR" id="Q9LRK5"/>
<dbReference type="PaxDb" id="3702-AT3G22020.1"/>
<dbReference type="PeptideAtlas" id="Q9LRK5"/>
<dbReference type="GeneID" id="821762"/>
<dbReference type="KEGG" id="ath:AT3G22020"/>
<dbReference type="Araport" id="AT3G22020"/>
<dbReference type="TAIR" id="AT3G22020"/>
<dbReference type="InParanoid" id="Q9LRK5"/>
<dbReference type="PhylomeDB" id="Q9LRK5"/>
<dbReference type="Proteomes" id="UP000006548">
    <property type="component" value="Chromosome 3"/>
</dbReference>
<dbReference type="ExpressionAtlas" id="Q9LRK5">
    <property type="expression patterns" value="baseline and differential"/>
</dbReference>
<dbReference type="GO" id="GO:0005576">
    <property type="term" value="C:extracellular region"/>
    <property type="evidence" value="ECO:0007669"/>
    <property type="project" value="UniProtKB-SubCell"/>
</dbReference>
<dbReference type="CDD" id="cd23509">
    <property type="entry name" value="Gnk2-like"/>
    <property type="match status" value="2"/>
</dbReference>
<dbReference type="Gene3D" id="3.30.430.20">
    <property type="entry name" value="Gnk2 domain, C-X8-C-X2-C motif"/>
    <property type="match status" value="2"/>
</dbReference>
<dbReference type="InterPro" id="IPR050581">
    <property type="entry name" value="CRR_secretory_protein"/>
</dbReference>
<dbReference type="InterPro" id="IPR002902">
    <property type="entry name" value="GNK2"/>
</dbReference>
<dbReference type="InterPro" id="IPR038408">
    <property type="entry name" value="GNK2_sf"/>
</dbReference>
<dbReference type="PANTHER" id="PTHR32411:SF54">
    <property type="entry name" value="CYSTEINE-RICH REPEAT SECRETORY PROTEIN 29-RELATED"/>
    <property type="match status" value="1"/>
</dbReference>
<dbReference type="PANTHER" id="PTHR32411">
    <property type="entry name" value="CYSTEINE-RICH REPEAT SECRETORY PROTEIN 38-RELATED"/>
    <property type="match status" value="1"/>
</dbReference>
<dbReference type="Pfam" id="PF01657">
    <property type="entry name" value="Stress-antifung"/>
    <property type="match status" value="2"/>
</dbReference>
<dbReference type="PROSITE" id="PS51473">
    <property type="entry name" value="GNK2"/>
    <property type="match status" value="2"/>
</dbReference>